<accession>Q27262</accession>
<accession>Q25181</accession>
<accession>Q27344</accession>
<evidence type="ECO:0000255" key="1"/>
<evidence type="ECO:0000255" key="2">
    <source>
        <dbReference type="PROSITE-ProRule" id="PRU00460"/>
    </source>
</evidence>
<evidence type="ECO:0000305" key="3"/>
<feature type="signal peptide" evidence="1">
    <location>
        <begin position="1"/>
        <end position="29"/>
    </location>
</feature>
<feature type="chain" id="PRO_0000017067" description="Laminin subunit beta-1">
    <location>
        <begin position="30"/>
        <end position="171" status="greater than"/>
    </location>
</feature>
<feature type="domain" description="Laminin EGF-like 1" evidence="2">
    <location>
        <begin position="66" status="less than"/>
        <end position="102"/>
    </location>
</feature>
<feature type="domain" description="Laminin EGF-like 2" evidence="2">
    <location>
        <begin position="103"/>
        <end position="160"/>
    </location>
</feature>
<feature type="domain" description="Laminin EGF-like 3" evidence="2">
    <location>
        <begin position="161"/>
        <end position="171" status="greater than"/>
    </location>
</feature>
<feature type="glycosylation site" description="N-linked (GlcNAc...) asparagine" evidence="1">
    <location>
        <position position="130"/>
    </location>
</feature>
<feature type="disulfide bond" evidence="2">
    <location>
        <begin position="59"/>
        <end position="69"/>
    </location>
</feature>
<feature type="disulfide bond" evidence="2">
    <location>
        <begin position="72"/>
        <end position="81"/>
    </location>
</feature>
<feature type="disulfide bond" evidence="2">
    <location>
        <begin position="84"/>
        <end position="100"/>
    </location>
</feature>
<feature type="disulfide bond" evidence="2">
    <location>
        <begin position="103"/>
        <end position="118"/>
    </location>
</feature>
<feature type="disulfide bond" evidence="2">
    <location>
        <begin position="105"/>
        <end position="128"/>
    </location>
</feature>
<feature type="disulfide bond" evidence="2">
    <location>
        <begin position="131"/>
        <end position="140"/>
    </location>
</feature>
<feature type="disulfide bond" evidence="2">
    <location>
        <begin position="143"/>
        <end position="158"/>
    </location>
</feature>
<feature type="non-consecutive residues" evidence="3">
    <location>
        <begin position="65"/>
        <end position="66"/>
    </location>
</feature>
<feature type="non-terminal residue">
    <location>
        <position position="171"/>
    </location>
</feature>
<organism>
    <name type="scientific">Hydra vulgaris</name>
    <name type="common">Hydra</name>
    <name type="synonym">Hydra attenuata</name>
    <dbReference type="NCBI Taxonomy" id="6087"/>
    <lineage>
        <taxon>Eukaryota</taxon>
        <taxon>Metazoa</taxon>
        <taxon>Cnidaria</taxon>
        <taxon>Hydrozoa</taxon>
        <taxon>Hydroidolina</taxon>
        <taxon>Anthoathecata</taxon>
        <taxon>Aplanulata</taxon>
        <taxon>Hydridae</taxon>
        <taxon>Hydra</taxon>
    </lineage>
</organism>
<proteinExistence type="evidence at transcript level"/>
<keyword id="KW-0084">Basement membrane</keyword>
<keyword id="KW-0130">Cell adhesion</keyword>
<keyword id="KW-1015">Disulfide bond</keyword>
<keyword id="KW-0272">Extracellular matrix</keyword>
<keyword id="KW-0325">Glycoprotein</keyword>
<keyword id="KW-0424">Laminin EGF-like domain</keyword>
<keyword id="KW-1185">Reference proteome</keyword>
<keyword id="KW-0677">Repeat</keyword>
<keyword id="KW-0964">Secreted</keyword>
<keyword id="KW-0732">Signal</keyword>
<sequence length="171" mass="18510">MNGRTQNLWFSTFRLVIVYALFFAKLCFGQEECLRGGCYPATGDLLVGRENRITATSTCGLKERTTGVCNNCLHNTKGTNCQLCKDGYYGNALLGTENVCQRCQCPGGSSGNQFSNTCELRDVGKVFCTNCSEGFTGTQCEKCDNGYYGNPLIQGGTCKKCLCNGNINSAS</sequence>
<comment type="function">
    <text>Binding to cells via a high affinity receptor, laminin is thought to mediate the attachment, migration and organization of cells into tissues during embryonic development by interacting with other extracellular matrix components.</text>
</comment>
<comment type="subunit">
    <text>Laminin is a complex glycoprotein, consisting of three different polypeptide chains (alpha, beta, gamma), which are bound to each other by disulfide bonds into a cross-shaped molecule comprising one long and three short arms with globules at each end.</text>
</comment>
<comment type="subcellular location">
    <subcellularLocation>
        <location>Secreted</location>
        <location>Extracellular space</location>
        <location>Extracellular matrix</location>
        <location>Basement membrane</location>
    </subcellularLocation>
    <text>Major component.</text>
</comment>
<name>LAMB1_HYDVU</name>
<protein>
    <recommendedName>
        <fullName>Laminin subunit beta-1</fullName>
    </recommendedName>
</protein>
<dbReference type="EMBL" id="Z47545">
    <property type="protein sequence ID" value="CAA87592.1"/>
    <property type="molecule type" value="mRNA"/>
</dbReference>
<dbReference type="EMBL" id="Z47546">
    <property type="protein sequence ID" value="CAA87593.1"/>
    <property type="molecule type" value="mRNA"/>
</dbReference>
<dbReference type="EMBL" id="U18998">
    <property type="protein sequence ID" value="AAB60621.1"/>
    <property type="molecule type" value="mRNA"/>
</dbReference>
<dbReference type="EMBL" id="U18999">
    <property type="protein sequence ID" value="AAB60623.1"/>
    <property type="molecule type" value="mRNA"/>
</dbReference>
<dbReference type="EMBL" id="U19000">
    <property type="protein sequence ID" value="AAB60622.1"/>
    <property type="molecule type" value="mRNA"/>
</dbReference>
<dbReference type="PIR" id="S57894">
    <property type="entry name" value="S57894"/>
</dbReference>
<dbReference type="OrthoDB" id="5985440at2759"/>
<dbReference type="Proteomes" id="UP000694840">
    <property type="component" value="Unplaced"/>
</dbReference>
<dbReference type="GO" id="GO:0005604">
    <property type="term" value="C:basement membrane"/>
    <property type="evidence" value="ECO:0007669"/>
    <property type="project" value="UniProtKB-SubCell"/>
</dbReference>
<dbReference type="GO" id="GO:0005576">
    <property type="term" value="C:extracellular region"/>
    <property type="evidence" value="ECO:0007669"/>
    <property type="project" value="UniProtKB-KW"/>
</dbReference>
<dbReference type="GO" id="GO:0009887">
    <property type="term" value="P:animal organ morphogenesis"/>
    <property type="evidence" value="ECO:0007669"/>
    <property type="project" value="TreeGrafter"/>
</dbReference>
<dbReference type="GO" id="GO:0007155">
    <property type="term" value="P:cell adhesion"/>
    <property type="evidence" value="ECO:0007669"/>
    <property type="project" value="UniProtKB-KW"/>
</dbReference>
<dbReference type="GO" id="GO:0009888">
    <property type="term" value="P:tissue development"/>
    <property type="evidence" value="ECO:0007669"/>
    <property type="project" value="TreeGrafter"/>
</dbReference>
<dbReference type="CDD" id="cd00055">
    <property type="entry name" value="EGF_Lam"/>
    <property type="match status" value="1"/>
</dbReference>
<dbReference type="FunFam" id="2.10.25.10:FF:000033">
    <property type="entry name" value="Laminin subunit alpha 2"/>
    <property type="match status" value="1"/>
</dbReference>
<dbReference type="FunFam" id="2.10.25.10:FF:000130">
    <property type="entry name" value="Laminin subunit beta 1"/>
    <property type="match status" value="1"/>
</dbReference>
<dbReference type="Gene3D" id="2.10.25.10">
    <property type="entry name" value="Laminin"/>
    <property type="match status" value="2"/>
</dbReference>
<dbReference type="InterPro" id="IPR050440">
    <property type="entry name" value="Laminin/Netrin_ECM"/>
</dbReference>
<dbReference type="InterPro" id="IPR002049">
    <property type="entry name" value="LE_dom"/>
</dbReference>
<dbReference type="InterPro" id="IPR056863">
    <property type="entry name" value="LMN_ATRN_NET-like_EGF"/>
</dbReference>
<dbReference type="PANTHER" id="PTHR10574:SF406">
    <property type="entry name" value="LAMININ SUBUNIT ALPHA 5"/>
    <property type="match status" value="1"/>
</dbReference>
<dbReference type="PANTHER" id="PTHR10574">
    <property type="entry name" value="NETRIN/LAMININ-RELATED"/>
    <property type="match status" value="1"/>
</dbReference>
<dbReference type="Pfam" id="PF00053">
    <property type="entry name" value="EGF_laminin"/>
    <property type="match status" value="1"/>
</dbReference>
<dbReference type="Pfam" id="PF24973">
    <property type="entry name" value="EGF_LMN_ATRN"/>
    <property type="match status" value="1"/>
</dbReference>
<dbReference type="SMART" id="SM00180">
    <property type="entry name" value="EGF_Lam"/>
    <property type="match status" value="2"/>
</dbReference>
<dbReference type="SUPFAM" id="SSF57196">
    <property type="entry name" value="EGF/Laminin"/>
    <property type="match status" value="2"/>
</dbReference>
<dbReference type="PROSITE" id="PS01248">
    <property type="entry name" value="EGF_LAM_1"/>
    <property type="match status" value="2"/>
</dbReference>
<dbReference type="PROSITE" id="PS50027">
    <property type="entry name" value="EGF_LAM_2"/>
    <property type="match status" value="2"/>
</dbReference>
<reference key="1">
    <citation type="journal article" date="1994" name="Dev. Biol.">
        <title>Cloning and biological function of laminin in Hydra vulgaris.</title>
        <authorList>
            <person name="Sarras M.P. Jr."/>
            <person name="Yan L."/>
            <person name="Grens A."/>
            <person name="Zhang X."/>
            <person name="Agbas A."/>
            <person name="Huff J.K."/>
            <person name="St John P.L."/>
            <person name="Abrahamson D.R."/>
        </authorList>
    </citation>
    <scope>NUCLEOTIDE SEQUENCE [MRNA]</scope>
</reference>